<accession>Q05513</accession>
<accession>A8K4N0</accession>
<accession>A8MU64</accession>
<accession>B7Z2J7</accession>
<accession>E9PCW2</accession>
<accession>Q15207</accession>
<accession>Q5SYT5</accession>
<accession>Q969S4</accession>
<proteinExistence type="evidence at protein level"/>
<feature type="chain" id="PRO_0000055701" description="Protein kinase C zeta type">
    <location>
        <begin position="1"/>
        <end position="592"/>
    </location>
</feature>
<feature type="domain" description="PB1" evidence="7">
    <location>
        <begin position="15"/>
        <end position="98"/>
    </location>
</feature>
<feature type="domain" description="Protein kinase" evidence="4">
    <location>
        <begin position="252"/>
        <end position="518"/>
    </location>
</feature>
<feature type="domain" description="AGC-kinase C-terminal" evidence="6">
    <location>
        <begin position="519"/>
        <end position="590"/>
    </location>
</feature>
<feature type="zinc finger region" description="Phorbol-ester/DAG-type" evidence="5">
    <location>
        <begin position="130"/>
        <end position="180"/>
    </location>
</feature>
<feature type="region of interest" description="Interaction with SQSTM1" evidence="1">
    <location>
        <begin position="79"/>
        <end position="145"/>
    </location>
</feature>
<feature type="active site" description="Proton acceptor" evidence="4 8">
    <location>
        <position position="376"/>
    </location>
</feature>
<feature type="binding site" evidence="4">
    <location>
        <begin position="258"/>
        <end position="266"/>
    </location>
    <ligand>
        <name>ATP</name>
        <dbReference type="ChEBI" id="CHEBI:30616"/>
    </ligand>
</feature>
<feature type="binding site" evidence="4">
    <location>
        <position position="281"/>
    </location>
    <ligand>
        <name>ATP</name>
        <dbReference type="ChEBI" id="CHEBI:30616"/>
    </ligand>
</feature>
<feature type="modified residue" description="Phosphothreonine; by PDPK1 and PI3K" evidence="19 27 34">
    <location>
        <position position="410"/>
    </location>
</feature>
<feature type="modified residue" description="Phosphothreonine" evidence="38 39">
    <location>
        <position position="560"/>
    </location>
</feature>
<feature type="modified residue" description="Phosphoserine" evidence="2">
    <location>
        <position position="591"/>
    </location>
</feature>
<feature type="splice variant" id="VSP_041904" description="In isoform 2." evidence="35">
    <location>
        <begin position="1"/>
        <end position="183"/>
    </location>
</feature>
<feature type="splice variant" id="VSP_046347" description="In isoform 3." evidence="35">
    <original>MPSRTGPKMEGSGGRVRLKAHYGGDIFITSVDAATTFEELCEEVRDMCRLHQQHPLTLKWVDSEGDPCTVSSQMELEEAFRLARQCRDEGLIIHVFPSTPEQPGLPCPGEDK</original>
    <variation>MLTPRTDE</variation>
    <location>
        <begin position="1"/>
        <end position="112"/>
    </location>
</feature>
<feature type="sequence variant" id="VAR_050560" description="In dbSNP:rs35271800.">
    <original>R</original>
    <variation>H</variation>
    <location>
        <position position="49"/>
    </location>
</feature>
<feature type="sequence variant" id="VAR_042310" description="In dbSNP:rs56017162." evidence="24">
    <original>R</original>
    <variation>H</variation>
    <location>
        <position position="84"/>
    </location>
</feature>
<feature type="sequence variant" id="VAR_035467" description="In a colorectal cancer sample; somatic mutation." evidence="22">
    <original>S</original>
    <variation>F</variation>
    <location>
        <position position="514"/>
    </location>
</feature>
<feature type="sequence variant" id="VAR_042311" description="In a colorectal adenocarcinoma sample; somatic mutation; dbSNP:rs376894109." evidence="24">
    <original>R</original>
    <variation>C</variation>
    <location>
        <position position="519"/>
    </location>
</feature>
<feature type="mutagenesis site" description="No effect on interaction with SQSTM1 and PARD6B." evidence="16">
    <original>K</original>
    <variation>A</variation>
    <location>
        <position position="19"/>
    </location>
</feature>
<feature type="mutagenesis site" description="Loss of interaction with SQSTM1 and PARD6B." evidence="16">
    <original>D</original>
    <variation>A</variation>
    <location>
        <position position="62"/>
    </location>
</feature>
<feature type="mutagenesis site" description="Loss of interaction with SQSTM1 and PARD6B." evidence="16">
    <original>D</original>
    <variation>A</variation>
    <location>
        <position position="66"/>
    </location>
</feature>
<feature type="sequence conflict" description="In Ref. 1; AAA36488." evidence="36" ref="1">
    <original>G</original>
    <variation>D</variation>
    <location>
        <position position="6"/>
    </location>
</feature>
<feature type="sequence conflict" description="In Ref. 3; BAF83684." evidence="36" ref="3">
    <original>K</original>
    <variation>R</variation>
    <location>
        <position position="198"/>
    </location>
</feature>
<feature type="sequence conflict" description="In Ref. 1; AAA36488." evidence="36" ref="1">
    <original>S</original>
    <variation>T</variation>
    <location>
        <position position="262"/>
    </location>
</feature>
<feature type="sequence conflict" description="In Ref. 3; BAH11883." evidence="36" ref="3">
    <original>K</original>
    <variation>R</variation>
    <location>
        <position position="281"/>
    </location>
</feature>
<feature type="sequence conflict" description="In Ref. 3; BAF83684." evidence="36" ref="3">
    <original>F</original>
    <variation>L</variation>
    <location>
        <position position="366"/>
    </location>
</feature>
<feature type="sequence conflict" description="In Ref. 3; BAF83684." evidence="36" ref="3">
    <original>R</original>
    <variation>G</variation>
    <location>
        <position position="500"/>
    </location>
</feature>
<feature type="sequence conflict" description="In Ref. 3; BAF83684." evidence="36" ref="3">
    <original>D</original>
    <variation>G</variation>
    <location>
        <position position="522"/>
    </location>
</feature>
<keyword id="KW-0877">Alternative promoter usage</keyword>
<keyword id="KW-0025">Alternative splicing</keyword>
<keyword id="KW-0067">ATP-binding</keyword>
<keyword id="KW-0965">Cell junction</keyword>
<keyword id="KW-0963">Cytoplasm</keyword>
<keyword id="KW-0967">Endosome</keyword>
<keyword id="KW-0395">Inflammatory response</keyword>
<keyword id="KW-0418">Kinase</keyword>
<keyword id="KW-0472">Membrane</keyword>
<keyword id="KW-0479">Metal-binding</keyword>
<keyword id="KW-0547">Nucleotide-binding</keyword>
<keyword id="KW-0597">Phosphoprotein</keyword>
<keyword id="KW-1267">Proteomics identification</keyword>
<keyword id="KW-1185">Reference proteome</keyword>
<keyword id="KW-0723">Serine/threonine-protein kinase</keyword>
<keyword id="KW-0808">Transferase</keyword>
<keyword id="KW-0862">Zinc</keyword>
<keyword id="KW-0863">Zinc-finger</keyword>
<sequence length="592" mass="67660">MPSRTGPKMEGSGGRVRLKAHYGGDIFITSVDAATTFEELCEEVRDMCRLHQQHPLTLKWVDSEGDPCTVSSQMELEEAFRLARQCRDEGLIIHVFPSTPEQPGLPCPGEDKSIYRRGARRWRKLYRANGHLFQAKRFNRRAYCGQCSERIWGLARQGYRCINCKLLVHKRCHGLVPLTCRKHMDSVMPSQEPPVDDKNEDADLPSEETDGIAYISSSRKHDSIKDDSEDLKPVIDGMDGIKISQGLGLQDFDLIRVIGRGSYAKVLLVRLKKNDQIYAMKVVKKELVHDDEDIDWVQTEKHVFEQASSNPFLVGLHSCFQTTSRLFLVIEYVNGGDLMFHMQRQRKLPEEHARFYAAEICIALNFLHERGIIYRDLKLDNVLLDADGHIKLTDYGMCKEGLGPGDTTSTFCGTPNYIAPEILRGEEYGFSVDWWALGVLMFEMMAGRSPFDIITDNPDMNTEDYLFQVILEKPIRIPRFLSVKASHVLKGFLNKDPKERLGCRPQTGFSDIKSHAFFRSIDWDLLEKKQALPPFQPQITDDYGLDNFDTQFTSEPVQLTPDDEDAIKRIDQSEFEGFEYINPLLLSTEESV</sequence>
<comment type="function">
    <text evidence="10 14 18 20 23 30 32">Calcium- and diacylglycerol-independent serine/threonine-protein kinase that functions in phosphatidylinositol 3-kinase (PI3K) pathway and mitogen-activated protein (MAP) kinase cascade, and is involved in NF-kappa-B activation, mitogenic signaling, cell proliferation, cell polarity, inflammatory response and maintenance of long-term potentiation (LTP). Upon lipopolysaccharide (LPS) treatment in macrophages, or following mitogenic stimuli, functions downstream of PI3K to activate MAP2K1/MEK1-MAPK1/ERK2 signaling cascade independently of RAF1 activation. Required for insulin-dependent activation of AKT3, but may function as an adapter rather than a direct activator. Upon insulin treatment may act as a downstream effector of PI3K and contribute to the activation of translocation of the glucose transporter SLC2A4/GLUT4 and subsequent glucose transport in adipocytes. In EGF-induced cells, binds and activates MAP2K5/MEK5-MAPK7/ERK5 independently of its kinase activity and can activate JUN promoter through MEF2C. Through binding with SQSTM1/p62, functions in interleukin-1 signaling and activation of NF-kappa-B with the specific adapters RIPK1 and TRAF6. Participates in TNF-dependent transactivation of NF-kappa-B by phosphorylating and activating IKBKB kinase, which in turn leads to the degradation of NF-kappa-B inhibitors. In migrating astrocytes, forms a cytoplasmic complex with PARD6A and is recruited by CDC42 to function in the establishment of cell polarity along with the microtubule motor and dynein. In association with FEZ1, stimulates neuronal differentiation in PC12 cells. In the inflammatory response, is required for the T-helper 2 (Th2) differentiation process, including interleukin production, efficient activation of JAK1 and the subsequent phosphorylation and nuclear translocation of STAT6. May be involved in development of allergic airway inflammation (asthma), a process dependent on Th2 immune response. In the NF-kappa-B-mediated inflammatory response, can relieve SETD6-dependent repression of NF-kappa-B target genes by phosphorylating the RELA subunit at 'Ser-311'. Phosphorylates VAMP2 in vitro (PubMed:17313651). Phosphorylates and activates LRRK1, which phosphorylates RAB proteins involved in intracellular trafficking (PubMed:36040231).</text>
</comment>
<comment type="function">
    <molecule>Isoform 2</molecule>
    <text evidence="3">Involved in late synaptic long term potention phase in CA1 hippocampal cells and long term memory maintenance.</text>
</comment>
<comment type="catalytic activity">
    <reaction evidence="18 20 30">
        <text>L-seryl-[protein] + ATP = O-phospho-L-seryl-[protein] + ADP + H(+)</text>
        <dbReference type="Rhea" id="RHEA:17989"/>
        <dbReference type="Rhea" id="RHEA-COMP:9863"/>
        <dbReference type="Rhea" id="RHEA-COMP:11604"/>
        <dbReference type="ChEBI" id="CHEBI:15378"/>
        <dbReference type="ChEBI" id="CHEBI:29999"/>
        <dbReference type="ChEBI" id="CHEBI:30616"/>
        <dbReference type="ChEBI" id="CHEBI:83421"/>
        <dbReference type="ChEBI" id="CHEBI:456216"/>
        <dbReference type="EC" id="2.7.11.13"/>
    </reaction>
</comment>
<comment type="catalytic activity">
    <reaction evidence="18 20 30">
        <text>L-threonyl-[protein] + ATP = O-phospho-L-threonyl-[protein] + ADP + H(+)</text>
        <dbReference type="Rhea" id="RHEA:46608"/>
        <dbReference type="Rhea" id="RHEA-COMP:11060"/>
        <dbReference type="Rhea" id="RHEA-COMP:11605"/>
        <dbReference type="ChEBI" id="CHEBI:15378"/>
        <dbReference type="ChEBI" id="CHEBI:30013"/>
        <dbReference type="ChEBI" id="CHEBI:30616"/>
        <dbReference type="ChEBI" id="CHEBI:61977"/>
        <dbReference type="ChEBI" id="CHEBI:456216"/>
        <dbReference type="EC" id="2.7.11.13"/>
    </reaction>
</comment>
<comment type="activity regulation">
    <text evidence="3">Atypical PKCs (PRKCI and PRKCZ) exhibit an elevated basal enzymatic activity (that may be due to the interaction with SMG1 or SQSTM1) and are not regulated by diacylglycerol, phosphatidylserine, phorbol esters or calcium ions. Two specific sites, Thr-410 (activation loop of the kinase domain) and Thr-560 (turn motif), need to be phosphorylated for its full activation. Phosphatidylinositol 3,4,5-trisphosphate might be a physiological activator (By similarity). Isoform 2: Constitutively active (By similarity).</text>
</comment>
<comment type="subunit">
    <text evidence="2 9 11 12 13 15 16 17 21 23 25 27 28 29 33 36">Forms a ternary complex with SQSTM1 and KCNAB2. Forms another ternary complex with SQSTM1 and GABRR3. Forms a complex with SQSTM1 and MAP2K5 (By similarity). Interacts with PARD6A, PARD6B, PARD6G and SQSTM1. Part of a complex with PARD3, PARD6A or PARD6B or PARD6G and CDC42 or RAC1. Interacts with ADAP1/CENTA1. Forms a ternary complex composed of SQSTM1 and PAWR. Interacts directly with SQSTM1 (Probable). Interacts with IKBKB. Interacts (via the protein kinase domain) with WWC1. Forms a tripartite complex with WWC1 and DDR1, but predominantly in the absence of collagen. Component of the Par polarity complex, composed of at least phosphorylated PRKCZ, PARD3 and TIAM1. Interacts with PDPK1 (via N-terminal region). Interacts with WDFY2 (via WD repeats 1-3) (PubMed:16792529). Interacts with VAMP2 (PubMed:17313651). Forms a complex with WDFY2 and VAMP2 (PubMed:17313651). Interacts with APPL1 (PubMed:26583432). Interacts with WWC1, WWC2 and WWC3 (PubMed:24682284).</text>
</comment>
<comment type="interaction">
    <interactant intactId="EBI-295351">
        <id>Q05513</id>
    </interactant>
    <interactant intactId="EBI-1646426">
        <id>Q15109</id>
        <label>AGER</label>
    </interactant>
    <organismsDiffer>false</organismsDiffer>
    <experiments>6</experiments>
</comment>
<comment type="interaction">
    <interactant intactId="EBI-295351">
        <id>Q05513</id>
    </interactant>
    <interactant intactId="EBI-296087">
        <id>P31749</id>
        <label>AKT1</label>
    </interactant>
    <organismsDiffer>false</organismsDiffer>
    <experiments>2</experiments>
</comment>
<comment type="interaction">
    <interactant intactId="EBI-295351">
        <id>Q05513</id>
    </interactant>
    <interactant intactId="EBI-958922">
        <id>O95999</id>
        <label>BCL10</label>
    </interactant>
    <organismsDiffer>false</organismsDiffer>
    <experiments>3</experiments>
</comment>
<comment type="interaction">
    <interactant intactId="EBI-295351">
        <id>Q05513</id>
    </interactant>
    <interactant intactId="EBI-347528">
        <id>Q07021</id>
        <label>C1QBP</label>
    </interactant>
    <organismsDiffer>false</organismsDiffer>
    <experiments>4</experiments>
</comment>
<comment type="interaction">
    <interactant intactId="EBI-295351">
        <id>Q05513</id>
    </interactant>
    <interactant intactId="EBI-352572">
        <id>P08238</id>
        <label>HSP90AB1</label>
    </interactant>
    <organismsDiffer>false</organismsDiffer>
    <experiments>2</experiments>
</comment>
<comment type="interaction">
    <interactant intactId="EBI-295351">
        <id>Q05513</id>
    </interactant>
    <interactant intactId="EBI-395044">
        <id>P14598</id>
        <label>NCF1</label>
    </interactant>
    <organismsDiffer>false</organismsDiffer>
    <experiments>3</experiments>
</comment>
<comment type="interaction">
    <interactant intactId="EBI-295351">
        <id>Q05513</id>
    </interactant>
    <interactant intactId="EBI-7199607">
        <id>P49757-1</id>
        <label>NUMB</label>
    </interactant>
    <organismsDiffer>false</organismsDiffer>
    <experiments>4</experiments>
</comment>
<comment type="interaction">
    <interactant intactId="EBI-295351">
        <id>Q05513</id>
    </interactant>
    <interactant intactId="EBI-81876">
        <id>Q9NPB6</id>
        <label>PARD6A</label>
    </interactant>
    <organismsDiffer>false</organismsDiffer>
    <experiments>10</experiments>
</comment>
<comment type="interaction">
    <interactant intactId="EBI-295351">
        <id>Q05513</id>
    </interactant>
    <interactant intactId="EBI-295391">
        <id>Q9BYG5</id>
        <label>PARD6B</label>
    </interactant>
    <organismsDiffer>false</organismsDiffer>
    <experiments>18</experiments>
</comment>
<comment type="interaction">
    <interactant intactId="EBI-295351">
        <id>Q05513</id>
    </interactant>
    <interactant intactId="EBI-295417">
        <id>Q9BYG4</id>
        <label>PARD6G</label>
    </interactant>
    <organismsDiffer>false</organismsDiffer>
    <experiments>9</experiments>
</comment>
<comment type="interaction">
    <interactant intactId="EBI-295351">
        <id>Q05513</id>
    </interactant>
    <interactant intactId="EBI-286199">
        <id>P41743</id>
        <label>PRKCI</label>
    </interactant>
    <organismsDiffer>false</organismsDiffer>
    <experiments>10</experiments>
</comment>
<comment type="interaction">
    <interactant intactId="EBI-295351">
        <id>Q05513</id>
    </interactant>
    <interactant intactId="EBI-374762">
        <id>Q04759</id>
        <label>PRKCQ</label>
    </interactant>
    <organismsDiffer>false</organismsDiffer>
    <experiments>3</experiments>
</comment>
<comment type="interaction">
    <interactant intactId="EBI-295351">
        <id>Q05513</id>
    </interactant>
    <interactant intactId="EBI-301246">
        <id>P40337</id>
        <label>VHL</label>
    </interactant>
    <organismsDiffer>false</organismsDiffer>
    <experiments>3</experiments>
</comment>
<comment type="interaction">
    <interactant intactId="EBI-295351">
        <id>Q05513</id>
    </interactant>
    <interactant intactId="EBI-429581">
        <id>P16554</id>
        <label>numb</label>
    </interactant>
    <organismsDiffer>true</organismsDiffer>
    <experiments>2</experiments>
</comment>
<comment type="subcellular location">
    <subcellularLocation>
        <location evidence="23 33">Cytoplasm</location>
    </subcellularLocation>
    <subcellularLocation>
        <location evidence="33">Endosome</location>
    </subcellularLocation>
    <subcellularLocation>
        <location evidence="31">Cell junction</location>
    </subcellularLocation>
    <subcellularLocation>
        <location evidence="2">Membrane</location>
        <topology evidence="36">Peripheral membrane protein</topology>
    </subcellularLocation>
    <text evidence="2 23 31 33">In the retina, localizes in the terminals of the rod bipolar cells (By similarity). Associates with endosomes (PubMed:9566925). Presence of KRIT1, CDH5 and RAP1B is required for its localization to the cell junction (PubMed:7597083). Colocalizes with VAMP2 and WDFY2 in intracellular vesicles (PubMed:17313651). Transiently translocates to the membrane of CA1 hippocampal cells in response to the induction of long term potentiation (By similarity).</text>
</comment>
<comment type="subcellular location">
    <molecule>Isoform 2</molecule>
    <subcellularLocation>
        <location evidence="2">Cytoplasm</location>
    </subcellularLocation>
</comment>
<comment type="alternative products">
    <event type="alternative promoter"/>
    <event type="alternative splicing"/>
    <isoform>
        <id>Q05513-1</id>
        <name>1</name>
        <sequence type="displayed"/>
    </isoform>
    <isoform>
        <id>Q05513-2</id>
        <name>2</name>
        <name evidence="2">PKMzeta</name>
        <sequence type="described" ref="VSP_041904"/>
    </isoform>
    <isoform>
        <id>Q05513-3</id>
        <name>3</name>
        <sequence type="described" ref="VSP_046347"/>
    </isoform>
</comment>
<comment type="tissue specificity">
    <text>Expressed in brain, and to a lesser extent in lung, kidney and testis.</text>
</comment>
<comment type="domain">
    <text evidence="16">The PB1 domain mediate mutually exclusive interactions with SQSTM1 and PARD6B.</text>
</comment>
<comment type="domain">
    <text evidence="16">The C1 domain does not bind the diacylglycerol (DAG).</text>
</comment>
<comment type="PTM">
    <text evidence="13 19 27 34">CDH5 is required for its phosphorylation at Thr-410. Phosphorylated by protein kinase PDPK1; phosphorylation is inhibited by the apoptotic C-terminal cleavage product of PKN2. Phosphorylation at Thr-410 by PI3K activates the kinase.</text>
</comment>
<comment type="miscellaneous">
    <molecule>Isoform 2</molecule>
    <text evidence="2">Produced by alternative promoter usage.</text>
</comment>
<comment type="similarity">
    <text evidence="36">Belongs to the protein kinase superfamily. AGC Ser/Thr protein kinase family. PKC subfamily.</text>
</comment>
<comment type="caution">
    <text evidence="18 20 26 37">Reported to phosphorylate STK11 leading to nuclear export of STK11, subsequent inhibition of PI3K/Akt signaling, and increased apoptosis in vein endothelial cells treated with the oxidant peroxynitrite (PubMed:18321849). However this paper was withdrawn by the authors due to concerns of image duplication in the figures. Its role in protein phosphorylation has been confirmed in other studies (PubMed:15084291, PubMed:15324659).</text>
</comment>
<comment type="sequence caution" evidence="36">
    <conflict type="erroneous initiation">
        <sequence resource="EMBL-CDS" id="CAA78813"/>
    </conflict>
    <text>Truncated N-terminus.</text>
</comment>
<organism>
    <name type="scientific">Homo sapiens</name>
    <name type="common">Human</name>
    <dbReference type="NCBI Taxonomy" id="9606"/>
    <lineage>
        <taxon>Eukaryota</taxon>
        <taxon>Metazoa</taxon>
        <taxon>Chordata</taxon>
        <taxon>Craniata</taxon>
        <taxon>Vertebrata</taxon>
        <taxon>Euteleostomi</taxon>
        <taxon>Mammalia</taxon>
        <taxon>Eutheria</taxon>
        <taxon>Euarchontoglires</taxon>
        <taxon>Primates</taxon>
        <taxon>Haplorrhini</taxon>
        <taxon>Catarrhini</taxon>
        <taxon>Hominidae</taxon>
        <taxon>Homo</taxon>
    </lineage>
</organism>
<reference key="1">
    <citation type="journal article" date="1993" name="Gene">
        <title>The cDNA sequence encoding human protein kinase C-zeta.</title>
        <authorList>
            <person name="Barbee J.L."/>
            <person name="Loomis C.R."/>
            <person name="Deutscher S.L."/>
            <person name="Burns D.J."/>
        </authorList>
    </citation>
    <scope>NUCLEOTIDE SEQUENCE [MRNA] (ISOFORM 1)</scope>
    <source>
        <tissue>Frontal cortex</tissue>
    </source>
</reference>
<reference key="2">
    <citation type="submission" date="2003-05" db="EMBL/GenBank/DDBJ databases">
        <title>Cloning of human full-length CDSs in BD Creator(TM) system donor vector.</title>
        <authorList>
            <person name="Kalnine N."/>
            <person name="Chen X."/>
            <person name="Rolfs A."/>
            <person name="Halleck A."/>
            <person name="Hines L."/>
            <person name="Eisenstein S."/>
            <person name="Koundinya M."/>
            <person name="Raphael J."/>
            <person name="Moreira D."/>
            <person name="Kelley T."/>
            <person name="LaBaer J."/>
            <person name="Lin Y."/>
            <person name="Phelan M."/>
            <person name="Farmer A."/>
        </authorList>
    </citation>
    <scope>NUCLEOTIDE SEQUENCE [LARGE SCALE MRNA] (ISOFORM 1)</scope>
</reference>
<reference key="3">
    <citation type="journal article" date="2004" name="Nat. Genet.">
        <title>Complete sequencing and characterization of 21,243 full-length human cDNAs.</title>
        <authorList>
            <person name="Ota T."/>
            <person name="Suzuki Y."/>
            <person name="Nishikawa T."/>
            <person name="Otsuki T."/>
            <person name="Sugiyama T."/>
            <person name="Irie R."/>
            <person name="Wakamatsu A."/>
            <person name="Hayashi K."/>
            <person name="Sato H."/>
            <person name="Nagai K."/>
            <person name="Kimura K."/>
            <person name="Makita H."/>
            <person name="Sekine M."/>
            <person name="Obayashi M."/>
            <person name="Nishi T."/>
            <person name="Shibahara T."/>
            <person name="Tanaka T."/>
            <person name="Ishii S."/>
            <person name="Yamamoto J."/>
            <person name="Saito K."/>
            <person name="Kawai Y."/>
            <person name="Isono Y."/>
            <person name="Nakamura Y."/>
            <person name="Nagahari K."/>
            <person name="Murakami K."/>
            <person name="Yasuda T."/>
            <person name="Iwayanagi T."/>
            <person name="Wagatsuma M."/>
            <person name="Shiratori A."/>
            <person name="Sudo H."/>
            <person name="Hosoiri T."/>
            <person name="Kaku Y."/>
            <person name="Kodaira H."/>
            <person name="Kondo H."/>
            <person name="Sugawara M."/>
            <person name="Takahashi M."/>
            <person name="Kanda K."/>
            <person name="Yokoi T."/>
            <person name="Furuya T."/>
            <person name="Kikkawa E."/>
            <person name="Omura Y."/>
            <person name="Abe K."/>
            <person name="Kamihara K."/>
            <person name="Katsuta N."/>
            <person name="Sato K."/>
            <person name="Tanikawa M."/>
            <person name="Yamazaki M."/>
            <person name="Ninomiya K."/>
            <person name="Ishibashi T."/>
            <person name="Yamashita H."/>
            <person name="Murakawa K."/>
            <person name="Fujimori K."/>
            <person name="Tanai H."/>
            <person name="Kimata M."/>
            <person name="Watanabe M."/>
            <person name="Hiraoka S."/>
            <person name="Chiba Y."/>
            <person name="Ishida S."/>
            <person name="Ono Y."/>
            <person name="Takiguchi S."/>
            <person name="Watanabe S."/>
            <person name="Yosida M."/>
            <person name="Hotuta T."/>
            <person name="Kusano J."/>
            <person name="Kanehori K."/>
            <person name="Takahashi-Fujii A."/>
            <person name="Hara H."/>
            <person name="Tanase T.-O."/>
            <person name="Nomura Y."/>
            <person name="Togiya S."/>
            <person name="Komai F."/>
            <person name="Hara R."/>
            <person name="Takeuchi K."/>
            <person name="Arita M."/>
            <person name="Imose N."/>
            <person name="Musashino K."/>
            <person name="Yuuki H."/>
            <person name="Oshima A."/>
            <person name="Sasaki N."/>
            <person name="Aotsuka S."/>
            <person name="Yoshikawa Y."/>
            <person name="Matsunawa H."/>
            <person name="Ichihara T."/>
            <person name="Shiohata N."/>
            <person name="Sano S."/>
            <person name="Moriya S."/>
            <person name="Momiyama H."/>
            <person name="Satoh N."/>
            <person name="Takami S."/>
            <person name="Terashima Y."/>
            <person name="Suzuki O."/>
            <person name="Nakagawa S."/>
            <person name="Senoh A."/>
            <person name="Mizoguchi H."/>
            <person name="Goto Y."/>
            <person name="Shimizu F."/>
            <person name="Wakebe H."/>
            <person name="Hishigaki H."/>
            <person name="Watanabe T."/>
            <person name="Sugiyama A."/>
            <person name="Takemoto M."/>
            <person name="Kawakami B."/>
            <person name="Yamazaki M."/>
            <person name="Watanabe K."/>
            <person name="Kumagai A."/>
            <person name="Itakura S."/>
            <person name="Fukuzumi Y."/>
            <person name="Fujimori Y."/>
            <person name="Komiyama M."/>
            <person name="Tashiro H."/>
            <person name="Tanigami A."/>
            <person name="Fujiwara T."/>
            <person name="Ono T."/>
            <person name="Yamada K."/>
            <person name="Fujii Y."/>
            <person name="Ozaki K."/>
            <person name="Hirao M."/>
            <person name="Ohmori Y."/>
            <person name="Kawabata A."/>
            <person name="Hikiji T."/>
            <person name="Kobatake N."/>
            <person name="Inagaki H."/>
            <person name="Ikema Y."/>
            <person name="Okamoto S."/>
            <person name="Okitani R."/>
            <person name="Kawakami T."/>
            <person name="Noguchi S."/>
            <person name="Itoh T."/>
            <person name="Shigeta K."/>
            <person name="Senba T."/>
            <person name="Matsumura K."/>
            <person name="Nakajima Y."/>
            <person name="Mizuno T."/>
            <person name="Morinaga M."/>
            <person name="Sasaki M."/>
            <person name="Togashi T."/>
            <person name="Oyama M."/>
            <person name="Hata H."/>
            <person name="Watanabe M."/>
            <person name="Komatsu T."/>
            <person name="Mizushima-Sugano J."/>
            <person name="Satoh T."/>
            <person name="Shirai Y."/>
            <person name="Takahashi Y."/>
            <person name="Nakagawa K."/>
            <person name="Okumura K."/>
            <person name="Nagase T."/>
            <person name="Nomura N."/>
            <person name="Kikuchi H."/>
            <person name="Masuho Y."/>
            <person name="Yamashita R."/>
            <person name="Nakai K."/>
            <person name="Yada T."/>
            <person name="Nakamura Y."/>
            <person name="Ohara O."/>
            <person name="Isogai T."/>
            <person name="Sugano S."/>
        </authorList>
    </citation>
    <scope>NUCLEOTIDE SEQUENCE [LARGE SCALE MRNA] (ISOFORMS 1; 2 AND 3)</scope>
    <source>
        <tissue>Brain</tissue>
        <tissue>Teratocarcinoma</tissue>
    </source>
</reference>
<reference key="4">
    <citation type="journal article" date="2006" name="Nature">
        <title>The DNA sequence and biological annotation of human chromosome 1.</title>
        <authorList>
            <person name="Gregory S.G."/>
            <person name="Barlow K.F."/>
            <person name="McLay K.E."/>
            <person name="Kaul R."/>
            <person name="Swarbreck D."/>
            <person name="Dunham A."/>
            <person name="Scott C.E."/>
            <person name="Howe K.L."/>
            <person name="Woodfine K."/>
            <person name="Spencer C.C.A."/>
            <person name="Jones M.C."/>
            <person name="Gillson C."/>
            <person name="Searle S."/>
            <person name="Zhou Y."/>
            <person name="Kokocinski F."/>
            <person name="McDonald L."/>
            <person name="Evans R."/>
            <person name="Phillips K."/>
            <person name="Atkinson A."/>
            <person name="Cooper R."/>
            <person name="Jones C."/>
            <person name="Hall R.E."/>
            <person name="Andrews T.D."/>
            <person name="Lloyd C."/>
            <person name="Ainscough R."/>
            <person name="Almeida J.P."/>
            <person name="Ambrose K.D."/>
            <person name="Anderson F."/>
            <person name="Andrew R.W."/>
            <person name="Ashwell R.I.S."/>
            <person name="Aubin K."/>
            <person name="Babbage A.K."/>
            <person name="Bagguley C.L."/>
            <person name="Bailey J."/>
            <person name="Beasley H."/>
            <person name="Bethel G."/>
            <person name="Bird C.P."/>
            <person name="Bray-Allen S."/>
            <person name="Brown J.Y."/>
            <person name="Brown A.J."/>
            <person name="Buckley D."/>
            <person name="Burton J."/>
            <person name="Bye J."/>
            <person name="Carder C."/>
            <person name="Chapman J.C."/>
            <person name="Clark S.Y."/>
            <person name="Clarke G."/>
            <person name="Clee C."/>
            <person name="Cobley V."/>
            <person name="Collier R.E."/>
            <person name="Corby N."/>
            <person name="Coville G.J."/>
            <person name="Davies J."/>
            <person name="Deadman R."/>
            <person name="Dunn M."/>
            <person name="Earthrowl M."/>
            <person name="Ellington A.G."/>
            <person name="Errington H."/>
            <person name="Frankish A."/>
            <person name="Frankland J."/>
            <person name="French L."/>
            <person name="Garner P."/>
            <person name="Garnett J."/>
            <person name="Gay L."/>
            <person name="Ghori M.R.J."/>
            <person name="Gibson R."/>
            <person name="Gilby L.M."/>
            <person name="Gillett W."/>
            <person name="Glithero R.J."/>
            <person name="Grafham D.V."/>
            <person name="Griffiths C."/>
            <person name="Griffiths-Jones S."/>
            <person name="Grocock R."/>
            <person name="Hammond S."/>
            <person name="Harrison E.S.I."/>
            <person name="Hart E."/>
            <person name="Haugen E."/>
            <person name="Heath P.D."/>
            <person name="Holmes S."/>
            <person name="Holt K."/>
            <person name="Howden P.J."/>
            <person name="Hunt A.R."/>
            <person name="Hunt S.E."/>
            <person name="Hunter G."/>
            <person name="Isherwood J."/>
            <person name="James R."/>
            <person name="Johnson C."/>
            <person name="Johnson D."/>
            <person name="Joy A."/>
            <person name="Kay M."/>
            <person name="Kershaw J.K."/>
            <person name="Kibukawa M."/>
            <person name="Kimberley A.M."/>
            <person name="King A."/>
            <person name="Knights A.J."/>
            <person name="Lad H."/>
            <person name="Laird G."/>
            <person name="Lawlor S."/>
            <person name="Leongamornlert D.A."/>
            <person name="Lloyd D.M."/>
            <person name="Loveland J."/>
            <person name="Lovell J."/>
            <person name="Lush M.J."/>
            <person name="Lyne R."/>
            <person name="Martin S."/>
            <person name="Mashreghi-Mohammadi M."/>
            <person name="Matthews L."/>
            <person name="Matthews N.S.W."/>
            <person name="McLaren S."/>
            <person name="Milne S."/>
            <person name="Mistry S."/>
            <person name="Moore M.J.F."/>
            <person name="Nickerson T."/>
            <person name="O'Dell C.N."/>
            <person name="Oliver K."/>
            <person name="Palmeiri A."/>
            <person name="Palmer S.A."/>
            <person name="Parker A."/>
            <person name="Patel D."/>
            <person name="Pearce A.V."/>
            <person name="Peck A.I."/>
            <person name="Pelan S."/>
            <person name="Phelps K."/>
            <person name="Phillimore B.J."/>
            <person name="Plumb R."/>
            <person name="Rajan J."/>
            <person name="Raymond C."/>
            <person name="Rouse G."/>
            <person name="Saenphimmachak C."/>
            <person name="Sehra H.K."/>
            <person name="Sheridan E."/>
            <person name="Shownkeen R."/>
            <person name="Sims S."/>
            <person name="Skuce C.D."/>
            <person name="Smith M."/>
            <person name="Steward C."/>
            <person name="Subramanian S."/>
            <person name="Sycamore N."/>
            <person name="Tracey A."/>
            <person name="Tromans A."/>
            <person name="Van Helmond Z."/>
            <person name="Wall M."/>
            <person name="Wallis J.M."/>
            <person name="White S."/>
            <person name="Whitehead S.L."/>
            <person name="Wilkinson J.E."/>
            <person name="Willey D.L."/>
            <person name="Williams H."/>
            <person name="Wilming L."/>
            <person name="Wray P.W."/>
            <person name="Wu Z."/>
            <person name="Coulson A."/>
            <person name="Vaudin M."/>
            <person name="Sulston J.E."/>
            <person name="Durbin R.M."/>
            <person name="Hubbard T."/>
            <person name="Wooster R."/>
            <person name="Dunham I."/>
            <person name="Carter N.P."/>
            <person name="McVean G."/>
            <person name="Ross M.T."/>
            <person name="Harrow J."/>
            <person name="Olson M.V."/>
            <person name="Beck S."/>
            <person name="Rogers J."/>
            <person name="Bentley D.R."/>
        </authorList>
    </citation>
    <scope>NUCLEOTIDE SEQUENCE [LARGE SCALE GENOMIC DNA]</scope>
</reference>
<reference key="5">
    <citation type="journal article" date="2004" name="Genome Res.">
        <title>The status, quality, and expansion of the NIH full-length cDNA project: the Mammalian Gene Collection (MGC).</title>
        <authorList>
            <consortium name="The MGC Project Team"/>
        </authorList>
    </citation>
    <scope>NUCLEOTIDE SEQUENCE [LARGE SCALE MRNA] (ISOFORM 1)</scope>
    <source>
        <tissue>Colon</tissue>
        <tissue>Ovary</tissue>
    </source>
</reference>
<reference key="6">
    <citation type="journal article" date="1993" name="Eur. J. Biochem.">
        <title>Activation and substrate specificity of the human protein kinase C alpha and zeta isoenzymes.</title>
        <authorList>
            <person name="Kochs G."/>
            <person name="Hummel R."/>
            <person name="Meyer D."/>
            <person name="Hug H."/>
            <person name="Marme D."/>
            <person name="Sarre T.F."/>
        </authorList>
    </citation>
    <scope>NUCLEOTIDE SEQUENCE [MRNA] OF 7-592</scope>
    <source>
        <tissue>Hippocampus</tissue>
    </source>
</reference>
<reference key="7">
    <citation type="journal article" date="1995" name="Proc. Natl. Acad. Sci. U.S.A.">
        <title>Regulated assembly of tight junctions by protein kinase C.</title>
        <authorList>
            <person name="Stuart R.O."/>
            <person name="Nigam S.K."/>
        </authorList>
    </citation>
    <scope>SUBCELLULAR LOCATION</scope>
</reference>
<reference key="8">
    <citation type="journal article" date="1998" name="Mol. Cell. Biol.">
        <title>Activation of the mitogen-activated protein kinase/extracellular signal-regulated kinase pathway by conventional, novel, and atypical protein kinase C isotypes.</title>
        <authorList>
            <person name="Schoenwasser D.C."/>
            <person name="Marais R.M."/>
            <person name="Marshall C.J."/>
            <person name="Parker P.J."/>
        </authorList>
    </citation>
    <scope>FUNCTION IN ACTIVATION OF MAP2K1/MEK1 AND MAPK1/ERK2</scope>
</reference>
<reference key="9">
    <citation type="journal article" date="1998" name="Mol. Cell. Biol.">
        <title>Localization of atypical protein kinase C isoforms into lysosome-targeted endosomes through interaction with p62.</title>
        <authorList>
            <person name="Sanchez P."/>
            <person name="De Carcer G."/>
            <person name="Sandoval I.V."/>
            <person name="Moscat J."/>
            <person name="Diaz-Meco M.T."/>
        </authorList>
    </citation>
    <scope>INTERACTION WITH SQSTM1</scope>
    <scope>SUBCELLULAR LOCATION</scope>
</reference>
<reference key="10">
    <citation type="journal article" date="1998" name="Curr. Biol.">
        <title>Regulation of protein kinase C zeta by PI 3-kinase and PDK-1.</title>
        <authorList>
            <person name="Chou M.M."/>
            <person name="Hou W."/>
            <person name="Johnson J."/>
            <person name="Graham L.K."/>
            <person name="Lee M.H."/>
            <person name="Chen C.S."/>
            <person name="Newton A.C."/>
            <person name="Schaffhausen B.S."/>
            <person name="Toker A."/>
        </authorList>
    </citation>
    <scope>PHOSPHORYLATION AT THR-410 BY PDPK1</scope>
</reference>
<reference key="11">
    <citation type="journal article" date="1999" name="EMBO J.">
        <title>The interaction of p62 with RIP links the atypical PKCs to NF-kappaB activation.</title>
        <authorList>
            <person name="Sanz L."/>
            <person name="Sanchez P."/>
            <person name="Lallena M.-J."/>
            <person name="Diaz-Meco M.T."/>
            <person name="Moscat J."/>
        </authorList>
    </citation>
    <scope>INTERACTION WITH SQSTM1 AND IKBKB</scope>
</reference>
<reference key="12">
    <citation type="journal article" date="2000" name="J. Immunol.">
        <title>Protein kinase C zeta plays a central role in activation of the p42/44 mitogen-activated protein kinase by endotoxin in alveolar macrophages.</title>
        <authorList>
            <person name="Monick M.M."/>
            <person name="Carter A.B."/>
            <person name="Flaherty D.M."/>
            <person name="Peterson M.W."/>
            <person name="Hunninghake G.W."/>
        </authorList>
    </citation>
    <scope>FUNCTION IN ACTIVATION OF MAPK1/ERK2</scope>
</reference>
<reference key="13">
    <citation type="journal article" date="2001" name="Genes Cells">
        <title>Human homologues of the Caenorhabditis elegans cell polarity protein PAR6 as an adaptor that links the small GTPases Rac and Cdc42 to atypical protein kinase C.</title>
        <authorList>
            <person name="Noda Y."/>
            <person name="Takeya R."/>
            <person name="Ohno S."/>
            <person name="Naito S."/>
            <person name="Ito T."/>
            <person name="Sumimoto H."/>
        </authorList>
    </citation>
    <scope>INTERACTION WITH PARD6A; PARD6B AND PARD6G</scope>
    <source>
        <tissue>Neuroblastoma</tissue>
    </source>
</reference>
<reference key="14">
    <citation type="journal article" date="2002" name="Biochemistry">
        <title>Regulation of both PDK1 and the phosphorylation of PKC-zeta and -delta by a C-terminal PRK2 fragment.</title>
        <authorList>
            <person name="Hodgkinson C.P."/>
            <person name="Sale G.J."/>
        </authorList>
    </citation>
    <scope>INTERACTION WITH PDPK1</scope>
    <scope>PHOSPHORYLATION</scope>
</reference>
<reference key="15">
    <citation type="journal article" date="2002" name="Biochemistry">
        <title>Characterization of PDK2 activity against protein kinase B gamma.</title>
        <authorList>
            <person name="Hodgkinson C.P."/>
            <person name="Sale E.M."/>
            <person name="Sale G.J."/>
        </authorList>
    </citation>
    <scope>FUNCTION IN ACTIVATION OF AKT3</scope>
</reference>
<reference key="16">
    <citation type="journal article" date="2002" name="FEBS Lett.">
        <title>p62 forms a ternary complex with PKCzeta and PAR-4 and antagonizes PAR-4-induced PKCzeta inhibition.</title>
        <authorList>
            <person name="Chang S."/>
            <person name="Kim J.H."/>
            <person name="Shin J."/>
        </authorList>
    </citation>
    <scope>INTERACTION WITH SQSTM1 AND PAWR</scope>
</reference>
<reference key="17">
    <citation type="journal article" date="2002" name="Gene">
        <title>Multiple splice variants of Par3 and of a novel related gene, Par3L, produce proteins with different binding properties.</title>
        <authorList>
            <person name="Gao L."/>
            <person name="Macara I.G."/>
            <person name="Joberty G."/>
        </authorList>
    </citation>
    <scope>INTERACTION WITH PARD3</scope>
</reference>
<reference key="18">
    <citation type="journal article" date="2003" name="Biochem. Biophys. Res. Commun.">
        <title>Centaurin-alpha(1) associates with and is phosphorylated by isoforms of protein kinase C.</title>
        <authorList>
            <person name="Zemlickova E."/>
            <person name="Dubois T."/>
            <person name="Kerai P."/>
            <person name="Clokie S."/>
            <person name="Cronshaw A.D."/>
            <person name="Wakefield R.I.D."/>
            <person name="Johannes F.-J."/>
            <person name="Aitken A."/>
        </authorList>
    </citation>
    <scope>INTERACTION WITH ADAP1</scope>
</reference>
<reference key="19">
    <citation type="journal article" date="2003" name="Mol. Cell">
        <title>PB1 domain-mediated heterodimerization in NADPH oxidase and signaling complexes of atypical protein kinase C with Par6 and p62.</title>
        <authorList>
            <person name="Wilson M.I."/>
            <person name="Gill D.J."/>
            <person name="Perisic O."/>
            <person name="Quinn M.T."/>
            <person name="Williams R.L."/>
        </authorList>
    </citation>
    <scope>INTERACTION WITH SQSTM1 AND PARD6B</scope>
    <scope>DOMAIN</scope>
    <scope>MUTAGENESIS OF LYS-19; ASP-62 AND ASP-66</scope>
</reference>
<reference key="20">
    <citation type="journal article" date="2004" name="Curr. Biol.">
        <title>Atypical PKC phosphorylates PAR-1 kinases to regulate localization and activity.</title>
        <authorList>
            <person name="Hurov J.B."/>
            <person name="Watkins J.L."/>
            <person name="Piwnica-Worms H."/>
        </authorList>
    </citation>
    <scope>FUNCTION IN PHOSPHORYLATION OF MARK2 AND MARK3</scope>
    <scope>CATALYTIC ACTIVITY</scope>
</reference>
<reference key="21">
    <citation type="journal article" date="2004" name="Curr. Biol.">
        <title>aPKC acts upstream of PAR-1b in both the establishment and maintenance of mammalian epithelial polarity.</title>
        <authorList>
            <person name="Suzuki A."/>
            <person name="Hirata M."/>
            <person name="Kamimura K."/>
            <person name="Maniwa R."/>
            <person name="Yamanaka T."/>
            <person name="Mizuno K."/>
            <person name="Kishikawa M."/>
            <person name="Hirose H."/>
            <person name="Amano Y."/>
            <person name="Izumi N."/>
            <person name="Miwa Y."/>
            <person name="Ohno S."/>
        </authorList>
    </citation>
    <scope>FUNCTION IN PHOSPHORYLATION OF MARK2</scope>
    <scope>CATALYTIC ACTIVITY</scope>
</reference>
<reference key="22">
    <citation type="journal article" date="2004" name="Mol. Cell. Biol.">
        <title>Role of atypical protein kinase C in estradiol-triggered G1/S progression of MCF-7 cells.</title>
        <authorList>
            <person name="Castoria G."/>
            <person name="Migliaccio A."/>
            <person name="Di Domenico M."/>
            <person name="Lombardi M."/>
            <person name="de Falco A."/>
            <person name="Varricchio L."/>
            <person name="Bilancio A."/>
            <person name="Barone M.V."/>
            <person name="Auricchio F."/>
        </authorList>
    </citation>
    <scope>PHOSPHORYLATION AT THR-410 BY PI3K</scope>
</reference>
<reference key="23">
    <citation type="journal article" date="2006" name="Biochem. J.">
        <title>A WD-FYVE protein binds to the kinases Akt and PKCzeta/lambda.</title>
        <authorList>
            <person name="Fritzius T."/>
            <person name="Burkard G."/>
            <person name="Haas E."/>
            <person name="Heinrich J."/>
            <person name="Schweneker M."/>
            <person name="Bosse M."/>
            <person name="Zimmermann S."/>
            <person name="Frey A.D."/>
            <person name="Caelers A."/>
            <person name="Bachmann A.S."/>
            <person name="Moelling K."/>
        </authorList>
    </citation>
    <scope>INTERACTION WITH WDFY2</scope>
</reference>
<reference key="24">
    <citation type="journal article" date="2007" name="FEBS J.">
        <title>WD-repeat-propeller-FYVE protein, ProF, binds VAMP2 and protein kinase Czeta.</title>
        <authorList>
            <person name="Fritzius T."/>
            <person name="Frey A.D."/>
            <person name="Schweneker M."/>
            <person name="Mayer D."/>
            <person name="Moelling K."/>
        </authorList>
    </citation>
    <scope>FUNCTION</scope>
    <scope>INTERACTION WITH VAMP2</scope>
    <scope>COMPLEX FORMATION WITH VAMP2 AND WDFY2</scope>
    <scope>SUBCELLULAR LOCATION</scope>
</reference>
<reference key="25">
    <citation type="journal article" date="2008" name="Biochim. Biophys. Acta">
        <title>KIBRA interacts with discoidin domain receptor 1 to modulate collagen-induced signalling.</title>
        <authorList>
            <person name="Hilton H.N."/>
            <person name="Stanford P.M."/>
            <person name="Harris J."/>
            <person name="Oakes S.R."/>
            <person name="Kaplan W."/>
            <person name="Daly R.J."/>
            <person name="Ormandy C.J."/>
        </authorList>
    </citation>
    <scope>INTERACTION WITH WWC1 AND DDR1</scope>
</reference>
<reference key="26">
    <citation type="journal article" date="2008" name="J. Biol. Chem.">
        <title>Protein kinase Czeta-dependent LKB1 serine 428 phosphorylation increases LKB1 nucleus export and apoptosis in endothelial cells.</title>
        <authorList>
            <person name="Song P."/>
            <person name="Xie Z."/>
            <person name="Wu Y."/>
            <person name="Xu J."/>
            <person name="Dong Y."/>
            <person name="Zou M.H."/>
        </authorList>
    </citation>
    <scope>RETRACTED PAPER</scope>
</reference>
<reference key="27">
    <citation type="journal article" date="2019" name="J. Biol. Chem.">
        <title>Withdrawal: Protein kinase Czeta-dependent LKB1 serine 428 phosphorylation increases LKB1 nucleus export and apoptosis in endothelial cells.</title>
        <authorList>
            <person name="Song P."/>
            <person name="Xie Z."/>
            <person name="Wu Y."/>
            <person name="Dong Y."/>
            <person name="Zou M.H."/>
        </authorList>
    </citation>
    <scope>RETRACTION NOTICE OF PUBMED:18321849</scope>
</reference>
<reference key="28">
    <citation type="journal article" date="2008" name="Mol. Cell">
        <title>Kinase-selective enrichment enables quantitative phosphoproteomics of the kinome across the cell cycle.</title>
        <authorList>
            <person name="Daub H."/>
            <person name="Olsen J.V."/>
            <person name="Bairlein M."/>
            <person name="Gnad F."/>
            <person name="Oppermann F.S."/>
            <person name="Korner R."/>
            <person name="Greff Z."/>
            <person name="Keri G."/>
            <person name="Stemmann O."/>
            <person name="Mann M."/>
        </authorList>
    </citation>
    <scope>IDENTIFICATION BY MASS SPECTROMETRY [LARGE SCALE ANALYSIS]</scope>
    <source>
        <tissue>Cervix carcinoma</tissue>
    </source>
</reference>
<reference key="29">
    <citation type="journal article" date="2008" name="Proc. Natl. Acad. Sci. U.S.A.">
        <title>A quantitative atlas of mitotic phosphorylation.</title>
        <authorList>
            <person name="Dephoure N."/>
            <person name="Zhou C."/>
            <person name="Villen J."/>
            <person name="Beausoleil S.A."/>
            <person name="Bakalarski C.E."/>
            <person name="Elledge S.J."/>
            <person name="Gygi S.P."/>
        </authorList>
    </citation>
    <scope>PHOSPHORYLATION [LARGE SCALE ANALYSIS] AT THR-560</scope>
    <scope>IDENTIFICATION BY MASS SPECTROMETRY [LARGE SCALE ANALYSIS]</scope>
    <source>
        <tissue>Cervix carcinoma</tissue>
    </source>
</reference>
<reference key="30">
    <citation type="journal article" date="2010" name="J. Cell Sci.">
        <title>CCM1 regulates vascular-lumen organization by inducing endothelial polarity.</title>
        <authorList>
            <person name="Lampugnani M.G."/>
            <person name="Orsenigo F."/>
            <person name="Rudini N."/>
            <person name="Maddaluno L."/>
            <person name="Boulday G."/>
            <person name="Chapon F."/>
            <person name="Dejana E."/>
        </authorList>
    </citation>
    <scope>SUBCELLULAR LOCATION</scope>
    <scope>SUBUNIT</scope>
    <scope>PHOSPHORYLATION AT THR-410</scope>
</reference>
<reference key="31">
    <citation type="journal article" date="2003" name="J. Biochem.">
        <title>Protein kinase Czeta (PKCzeta): activation mechanisms and cellular functions.</title>
        <authorList>
            <person name="Hirai T."/>
            <person name="Chida K."/>
        </authorList>
    </citation>
    <scope>REVIEW ON FUNCTION</scope>
</reference>
<reference key="32">
    <citation type="journal article" date="2006" name="Biochemistry (Mosc.)">
        <title>Protein kinase Czeta and glucose uptake.</title>
        <authorList>
            <person name="Liu L.Z."/>
            <person name="He A.B."/>
            <person name="Liu X.J."/>
            <person name="Li Y."/>
            <person name="Chang Y.S."/>
            <person name="Fang F.D."/>
        </authorList>
    </citation>
    <scope>REVIEW ON FUNCTION</scope>
</reference>
<reference key="33">
    <citation type="journal article" date="2006" name="Cell Death Differ.">
        <title>PKCzeta at the crossroad of NF-kappaB and Jak1/Stat6 signaling pathways.</title>
        <authorList>
            <person name="Moscat J."/>
            <person name="Rennert P."/>
            <person name="Diaz-Meco M.T."/>
        </authorList>
    </citation>
    <scope>REVIEW ON FUNCTION</scope>
</reference>
<reference key="34">
    <citation type="journal article" date="2011" name="BMC Syst. Biol.">
        <title>Initial characterization of the human central proteome.</title>
        <authorList>
            <person name="Burkard T.R."/>
            <person name="Planyavsky M."/>
            <person name="Kaupe I."/>
            <person name="Breitwieser F.P."/>
            <person name="Buerckstuemmer T."/>
            <person name="Bennett K.L."/>
            <person name="Superti-Furga G."/>
            <person name="Colinge J."/>
        </authorList>
    </citation>
    <scope>IDENTIFICATION BY MASS SPECTROMETRY [LARGE SCALE ANALYSIS]</scope>
</reference>
<reference key="35">
    <citation type="journal article" date="2014" name="J. Proteomics">
        <title>An enzyme assisted RP-RPLC approach for in-depth analysis of human liver phosphoproteome.</title>
        <authorList>
            <person name="Bian Y."/>
            <person name="Song C."/>
            <person name="Cheng K."/>
            <person name="Dong M."/>
            <person name="Wang F."/>
            <person name="Huang J."/>
            <person name="Sun D."/>
            <person name="Wang L."/>
            <person name="Ye M."/>
            <person name="Zou H."/>
        </authorList>
    </citation>
    <scope>PHOSPHORYLATION [LARGE SCALE ANALYSIS] AT THR-560</scope>
    <scope>IDENTIFICATION BY MASS SPECTROMETRY [LARGE SCALE ANALYSIS]</scope>
    <source>
        <tissue>Liver</tissue>
    </source>
</reference>
<reference key="36">
    <citation type="journal article" date="2014" name="Mol. Biol. Evol.">
        <title>Evolutionary and Molecular Facts Link the WWC Protein Family to Hippo Signaling.</title>
        <authorList>
            <person name="Wennmann D.O."/>
            <person name="Schmitz J."/>
            <person name="Wehr M.C."/>
            <person name="Krahn M.P."/>
            <person name="Koschmal N."/>
            <person name="Gromnitza S."/>
            <person name="Schulze U."/>
            <person name="Weide T."/>
            <person name="Chekuri A."/>
            <person name="Skryabin B.V."/>
            <person name="Gerke V."/>
            <person name="Pavenstadt H."/>
            <person name="Duning K."/>
            <person name="Kremerskothen J."/>
        </authorList>
    </citation>
    <scope>INTERACTION WITH WWC1; WWC2 AND WWC3</scope>
</reference>
<reference key="37">
    <citation type="journal article" date="2016" name="Oncotarget">
        <title>APPL proteins promote TGFbeta-induced nuclear transport of the TGFbeta type I receptor intracellular domain.</title>
        <authorList>
            <person name="Song J."/>
            <person name="Mu Y."/>
            <person name="Li C."/>
            <person name="Bergh A."/>
            <person name="Miaczynska M."/>
            <person name="Heldin C.H."/>
            <person name="Landstroem M."/>
        </authorList>
    </citation>
    <scope>INTERACTION WITH APPL1</scope>
</reference>
<reference key="38">
    <citation type="journal article" date="2022" name="Biochem. J.">
        <title>PKC isoforms activate LRRK1 kinase by phosphorylating conserved residues (Ser1064, Ser1074 and Thr1075) within the CORB GTPase domain.</title>
        <authorList>
            <person name="Malik A.U."/>
            <person name="Karapetsas A."/>
            <person name="Nirujogi R.S."/>
            <person name="Chatterjee D."/>
            <person name="Phung T.K."/>
            <person name="Wightman M."/>
            <person name="Gourlay R."/>
            <person name="Morrice N."/>
            <person name="Mathea S."/>
            <person name="Knapp S."/>
            <person name="Alessi D.R."/>
        </authorList>
    </citation>
    <scope>FUNCTION IN PHOSPHORYLATION OF LRRK1</scope>
    <scope>CATALYTIC ACTIVITY</scope>
</reference>
<reference key="39">
    <citation type="journal article" date="2006" name="Science">
        <title>The consensus coding sequences of human breast and colorectal cancers.</title>
        <authorList>
            <person name="Sjoeblom T."/>
            <person name="Jones S."/>
            <person name="Wood L.D."/>
            <person name="Parsons D.W."/>
            <person name="Lin J."/>
            <person name="Barber T.D."/>
            <person name="Mandelker D."/>
            <person name="Leary R.J."/>
            <person name="Ptak J."/>
            <person name="Silliman N."/>
            <person name="Szabo S."/>
            <person name="Buckhaults P."/>
            <person name="Farrell C."/>
            <person name="Meeh P."/>
            <person name="Markowitz S.D."/>
            <person name="Willis J."/>
            <person name="Dawson D."/>
            <person name="Willson J.K.V."/>
            <person name="Gazdar A.F."/>
            <person name="Hartigan J."/>
            <person name="Wu L."/>
            <person name="Liu C."/>
            <person name="Parmigiani G."/>
            <person name="Park B.H."/>
            <person name="Bachman K.E."/>
            <person name="Papadopoulos N."/>
            <person name="Vogelstein B."/>
            <person name="Kinzler K.W."/>
            <person name="Velculescu V.E."/>
        </authorList>
    </citation>
    <scope>VARIANT [LARGE SCALE ANALYSIS] PHE-514</scope>
</reference>
<reference key="40">
    <citation type="journal article" date="2007" name="Nature">
        <title>Patterns of somatic mutation in human cancer genomes.</title>
        <authorList>
            <person name="Greenman C."/>
            <person name="Stephens P."/>
            <person name="Smith R."/>
            <person name="Dalgliesh G.L."/>
            <person name="Hunter C."/>
            <person name="Bignell G."/>
            <person name="Davies H."/>
            <person name="Teague J."/>
            <person name="Butler A."/>
            <person name="Stevens C."/>
            <person name="Edkins S."/>
            <person name="O'Meara S."/>
            <person name="Vastrik I."/>
            <person name="Schmidt E.E."/>
            <person name="Avis T."/>
            <person name="Barthorpe S."/>
            <person name="Bhamra G."/>
            <person name="Buck G."/>
            <person name="Choudhury B."/>
            <person name="Clements J."/>
            <person name="Cole J."/>
            <person name="Dicks E."/>
            <person name="Forbes S."/>
            <person name="Gray K."/>
            <person name="Halliday K."/>
            <person name="Harrison R."/>
            <person name="Hills K."/>
            <person name="Hinton J."/>
            <person name="Jenkinson A."/>
            <person name="Jones D."/>
            <person name="Menzies A."/>
            <person name="Mironenko T."/>
            <person name="Perry J."/>
            <person name="Raine K."/>
            <person name="Richardson D."/>
            <person name="Shepherd R."/>
            <person name="Small A."/>
            <person name="Tofts C."/>
            <person name="Varian J."/>
            <person name="Webb T."/>
            <person name="West S."/>
            <person name="Widaa S."/>
            <person name="Yates A."/>
            <person name="Cahill D.P."/>
            <person name="Louis D.N."/>
            <person name="Goldstraw P."/>
            <person name="Nicholson A.G."/>
            <person name="Brasseur F."/>
            <person name="Looijenga L."/>
            <person name="Weber B.L."/>
            <person name="Chiew Y.-E."/>
            <person name="DeFazio A."/>
            <person name="Greaves M.F."/>
            <person name="Green A.R."/>
            <person name="Campbell P."/>
            <person name="Birney E."/>
            <person name="Easton D.F."/>
            <person name="Chenevix-Trench G."/>
            <person name="Tan M.-H."/>
            <person name="Khoo S.K."/>
            <person name="Teh B.T."/>
            <person name="Yuen S.T."/>
            <person name="Leung S.Y."/>
            <person name="Wooster R."/>
            <person name="Futreal P.A."/>
            <person name="Stratton M.R."/>
        </authorList>
    </citation>
    <scope>VARIANTS [LARGE SCALE ANALYSIS] HIS-84 AND CYS-519</scope>
</reference>
<evidence type="ECO:0000250" key="1"/>
<evidence type="ECO:0000250" key="2">
    <source>
        <dbReference type="UniProtKB" id="P09217"/>
    </source>
</evidence>
<evidence type="ECO:0000250" key="3">
    <source>
        <dbReference type="UniProtKB" id="Q02956"/>
    </source>
</evidence>
<evidence type="ECO:0000255" key="4">
    <source>
        <dbReference type="PROSITE-ProRule" id="PRU00159"/>
    </source>
</evidence>
<evidence type="ECO:0000255" key="5">
    <source>
        <dbReference type="PROSITE-ProRule" id="PRU00226"/>
    </source>
</evidence>
<evidence type="ECO:0000255" key="6">
    <source>
        <dbReference type="PROSITE-ProRule" id="PRU00618"/>
    </source>
</evidence>
<evidence type="ECO:0000255" key="7">
    <source>
        <dbReference type="PROSITE-ProRule" id="PRU01081"/>
    </source>
</evidence>
<evidence type="ECO:0000255" key="8">
    <source>
        <dbReference type="PROSITE-ProRule" id="PRU10027"/>
    </source>
</evidence>
<evidence type="ECO:0000269" key="9">
    <source>
    </source>
</evidence>
<evidence type="ECO:0000269" key="10">
    <source>
    </source>
</evidence>
<evidence type="ECO:0000269" key="11">
    <source>
    </source>
</evidence>
<evidence type="ECO:0000269" key="12">
    <source>
    </source>
</evidence>
<evidence type="ECO:0000269" key="13">
    <source>
    </source>
</evidence>
<evidence type="ECO:0000269" key="14">
    <source>
    </source>
</evidence>
<evidence type="ECO:0000269" key="15">
    <source>
    </source>
</evidence>
<evidence type="ECO:0000269" key="16">
    <source>
    </source>
</evidence>
<evidence type="ECO:0000269" key="17">
    <source>
    </source>
</evidence>
<evidence type="ECO:0000269" key="18">
    <source>
    </source>
</evidence>
<evidence type="ECO:0000269" key="19">
    <source>
    </source>
</evidence>
<evidence type="ECO:0000269" key="20">
    <source>
    </source>
</evidence>
<evidence type="ECO:0000269" key="21">
    <source>
    </source>
</evidence>
<evidence type="ECO:0000269" key="22">
    <source>
    </source>
</evidence>
<evidence type="ECO:0000269" key="23">
    <source>
    </source>
</evidence>
<evidence type="ECO:0000269" key="24">
    <source>
    </source>
</evidence>
<evidence type="ECO:0000269" key="25">
    <source>
    </source>
</evidence>
<evidence type="ECO:0000269" key="26">
    <source>
    </source>
</evidence>
<evidence type="ECO:0000269" key="27">
    <source>
    </source>
</evidence>
<evidence type="ECO:0000269" key="28">
    <source>
    </source>
</evidence>
<evidence type="ECO:0000269" key="29">
    <source>
    </source>
</evidence>
<evidence type="ECO:0000269" key="30">
    <source>
    </source>
</evidence>
<evidence type="ECO:0000269" key="31">
    <source>
    </source>
</evidence>
<evidence type="ECO:0000269" key="32">
    <source>
    </source>
</evidence>
<evidence type="ECO:0000269" key="33">
    <source>
    </source>
</evidence>
<evidence type="ECO:0000269" key="34">
    <source>
    </source>
</evidence>
<evidence type="ECO:0000303" key="35">
    <source>
    </source>
</evidence>
<evidence type="ECO:0000305" key="36"/>
<evidence type="ECO:0000305" key="37">
    <source>
    </source>
</evidence>
<evidence type="ECO:0007744" key="38">
    <source>
    </source>
</evidence>
<evidence type="ECO:0007744" key="39">
    <source>
    </source>
</evidence>
<dbReference type="EC" id="2.7.11.13" evidence="18 20 30"/>
<dbReference type="EMBL" id="L14283">
    <property type="protein sequence ID" value="AAA36488.1"/>
    <property type="molecule type" value="mRNA"/>
</dbReference>
<dbReference type="EMBL" id="BT007082">
    <property type="protein sequence ID" value="AAP35745.1"/>
    <property type="molecule type" value="mRNA"/>
</dbReference>
<dbReference type="EMBL" id="AK290995">
    <property type="protein sequence ID" value="BAF83684.1"/>
    <property type="molecule type" value="mRNA"/>
</dbReference>
<dbReference type="EMBL" id="AK294649">
    <property type="protein sequence ID" value="BAH11833.1"/>
    <property type="molecule type" value="mRNA"/>
</dbReference>
<dbReference type="EMBL" id="AK294782">
    <property type="protein sequence ID" value="BAH11883.1"/>
    <property type="molecule type" value="mRNA"/>
</dbReference>
<dbReference type="EMBL" id="AL162271">
    <property type="status" value="NOT_ANNOTATED_CDS"/>
    <property type="molecule type" value="Genomic_DNA"/>
</dbReference>
<dbReference type="EMBL" id="AL391845">
    <property type="status" value="NOT_ANNOTATED_CDS"/>
    <property type="molecule type" value="Genomic_DNA"/>
</dbReference>
<dbReference type="EMBL" id="AL590822">
    <property type="status" value="NOT_ANNOTATED_CDS"/>
    <property type="molecule type" value="Genomic_DNA"/>
</dbReference>
<dbReference type="EMBL" id="AL645703">
    <property type="status" value="NOT_ANNOTATED_CDS"/>
    <property type="molecule type" value="Genomic_DNA"/>
</dbReference>
<dbReference type="EMBL" id="BC008058">
    <property type="protein sequence ID" value="AAH08058.1"/>
    <property type="molecule type" value="mRNA"/>
</dbReference>
<dbReference type="EMBL" id="BC014270">
    <property type="protein sequence ID" value="AAH14270.1"/>
    <property type="molecule type" value="mRNA"/>
</dbReference>
<dbReference type="EMBL" id="Z15108">
    <property type="protein sequence ID" value="CAA78813.1"/>
    <property type="status" value="ALT_INIT"/>
    <property type="molecule type" value="mRNA"/>
</dbReference>
<dbReference type="CCDS" id="CCDS37.1">
    <molecule id="Q05513-1"/>
</dbReference>
<dbReference type="CCDS" id="CCDS41229.1">
    <molecule id="Q05513-2"/>
</dbReference>
<dbReference type="CCDS" id="CCDS55563.1">
    <molecule id="Q05513-3"/>
</dbReference>
<dbReference type="PIR" id="JN0877">
    <property type="entry name" value="JN0877"/>
</dbReference>
<dbReference type="RefSeq" id="NP_001028753.1">
    <molecule id="Q05513-2"/>
    <property type="nucleotide sequence ID" value="NM_001033581.3"/>
</dbReference>
<dbReference type="RefSeq" id="NP_001028754.1">
    <molecule id="Q05513-2"/>
    <property type="nucleotide sequence ID" value="NM_001033582.3"/>
</dbReference>
<dbReference type="RefSeq" id="NP_001229803.1">
    <molecule id="Q05513-3"/>
    <property type="nucleotide sequence ID" value="NM_001242874.3"/>
</dbReference>
<dbReference type="RefSeq" id="NP_002735.3">
    <molecule id="Q05513-1"/>
    <property type="nucleotide sequence ID" value="NM_002744.4"/>
</dbReference>
<dbReference type="RefSeq" id="XP_016857288.1">
    <property type="nucleotide sequence ID" value="XM_017001799.1"/>
</dbReference>
<dbReference type="RefSeq" id="XP_047281304.1">
    <molecule id="Q05513-2"/>
    <property type="nucleotide sequence ID" value="XM_047425348.1"/>
</dbReference>
<dbReference type="RefSeq" id="XP_054193674.1">
    <molecule id="Q05513-2"/>
    <property type="nucleotide sequence ID" value="XM_054337699.1"/>
</dbReference>
<dbReference type="SMR" id="Q05513"/>
<dbReference type="BioGRID" id="111576">
    <property type="interactions" value="380"/>
</dbReference>
<dbReference type="ComplexPortal" id="CPX-6195">
    <property type="entry name" value="PAR cell polarity complex, PARD6G-PRKCZ variant"/>
</dbReference>
<dbReference type="ComplexPortal" id="CPX-6196">
    <property type="entry name" value="PAR cell polarity complex, PARD6B-PRKCZ variant"/>
</dbReference>
<dbReference type="ComplexPortal" id="CPX-6197">
    <property type="entry name" value="PAR cell polarity complex, PARD6A-PRKCZ variant"/>
</dbReference>
<dbReference type="CORUM" id="Q05513"/>
<dbReference type="ELM" id="Q05513"/>
<dbReference type="FunCoup" id="Q05513">
    <property type="interactions" value="1725"/>
</dbReference>
<dbReference type="IntAct" id="Q05513">
    <property type="interactions" value="229"/>
</dbReference>
<dbReference type="MINT" id="Q05513"/>
<dbReference type="STRING" id="9606.ENSP00000367830"/>
<dbReference type="BindingDB" id="Q05513"/>
<dbReference type="ChEMBL" id="CHEMBL3438"/>
<dbReference type="DrugBank" id="DB09096">
    <property type="generic name" value="Benzoyl peroxide"/>
</dbReference>
<dbReference type="DrugBank" id="DB03777">
    <property type="generic name" value="Bisindolylmaleimide I"/>
</dbReference>
<dbReference type="DrugBank" id="DB04209">
    <property type="generic name" value="Dequalinium"/>
</dbReference>
<dbReference type="DrugBank" id="DB17029">
    <property type="generic name" value="Go-6976"/>
</dbReference>
<dbReference type="DrugBank" id="DB02010">
    <property type="generic name" value="Staurosporine"/>
</dbReference>
<dbReference type="DrugBank" id="DB00675">
    <property type="generic name" value="Tamoxifen"/>
</dbReference>
<dbReference type="DrugCentral" id="Q05513"/>
<dbReference type="GuidetoPHARMACOLOGY" id="1491"/>
<dbReference type="MoonDB" id="Q05513">
    <property type="type" value="Predicted"/>
</dbReference>
<dbReference type="GlyGen" id="Q05513">
    <property type="glycosylation" value="2 sites, 1 O-linked glycan (1 site)"/>
</dbReference>
<dbReference type="iPTMnet" id="Q05513"/>
<dbReference type="PhosphoSitePlus" id="Q05513"/>
<dbReference type="BioMuta" id="PRKCZ"/>
<dbReference type="DMDM" id="68067736"/>
<dbReference type="jPOST" id="Q05513"/>
<dbReference type="MassIVE" id="Q05513"/>
<dbReference type="PaxDb" id="9606-ENSP00000367830"/>
<dbReference type="PeptideAtlas" id="Q05513"/>
<dbReference type="ProteomicsDB" id="19529"/>
<dbReference type="ProteomicsDB" id="58330">
    <molecule id="Q05513-1"/>
</dbReference>
<dbReference type="ProteomicsDB" id="58331">
    <molecule id="Q05513-2"/>
</dbReference>
<dbReference type="Pumba" id="Q05513"/>
<dbReference type="Antibodypedia" id="3869">
    <property type="antibodies" value="849 antibodies from 45 providers"/>
</dbReference>
<dbReference type="DNASU" id="5590"/>
<dbReference type="Ensembl" id="ENST00000378567.8">
    <molecule id="Q05513-1"/>
    <property type="protein sequence ID" value="ENSP00000367830.3"/>
    <property type="gene ID" value="ENSG00000067606.17"/>
</dbReference>
<dbReference type="Ensembl" id="ENST00000400921.6">
    <molecule id="Q05513-2"/>
    <property type="protein sequence ID" value="ENSP00000383712.2"/>
    <property type="gene ID" value="ENSG00000067606.17"/>
</dbReference>
<dbReference type="Ensembl" id="ENST00000461106.6">
    <molecule id="Q05513-3"/>
    <property type="protein sequence ID" value="ENSP00000426412.1"/>
    <property type="gene ID" value="ENSG00000067606.17"/>
</dbReference>
<dbReference type="GeneID" id="5590"/>
<dbReference type="KEGG" id="hsa:5590"/>
<dbReference type="MANE-Select" id="ENST00000378567.8">
    <property type="protein sequence ID" value="ENSP00000367830.3"/>
    <property type="RefSeq nucleotide sequence ID" value="NM_002744.6"/>
    <property type="RefSeq protein sequence ID" value="NP_002735.3"/>
</dbReference>
<dbReference type="UCSC" id="uc001aiq.3">
    <molecule id="Q05513-1"/>
    <property type="organism name" value="human"/>
</dbReference>
<dbReference type="AGR" id="HGNC:9412"/>
<dbReference type="CTD" id="5590"/>
<dbReference type="DisGeNET" id="5590"/>
<dbReference type="GeneCards" id="PRKCZ"/>
<dbReference type="HGNC" id="HGNC:9412">
    <property type="gene designation" value="PRKCZ"/>
</dbReference>
<dbReference type="HPA" id="ENSG00000067606">
    <property type="expression patterns" value="Tissue enhanced (brain)"/>
</dbReference>
<dbReference type="MalaCards" id="PRKCZ"/>
<dbReference type="MIM" id="176982">
    <property type="type" value="gene"/>
</dbReference>
<dbReference type="neXtProt" id="NX_Q05513"/>
<dbReference type="OpenTargets" id="ENSG00000067606"/>
<dbReference type="Orphanet" id="1606">
    <property type="disease" value="1p36 deletion syndrome"/>
</dbReference>
<dbReference type="PharmGKB" id="PA33775"/>
<dbReference type="VEuPathDB" id="HostDB:ENSG00000067606"/>
<dbReference type="eggNOG" id="KOG0695">
    <property type="taxonomic scope" value="Eukaryota"/>
</dbReference>
<dbReference type="GeneTree" id="ENSGT00940000153497"/>
<dbReference type="HOGENOM" id="CLU_000288_63_5_1"/>
<dbReference type="InParanoid" id="Q05513"/>
<dbReference type="OMA" id="DKMAGLC"/>
<dbReference type="OrthoDB" id="63267at2759"/>
<dbReference type="PAN-GO" id="Q05513">
    <property type="GO annotations" value="3 GO annotations based on evolutionary models"/>
</dbReference>
<dbReference type="PhylomeDB" id="Q05513"/>
<dbReference type="TreeFam" id="TF102004"/>
<dbReference type="BRENDA" id="2.7.11.13">
    <property type="organism ID" value="2681"/>
</dbReference>
<dbReference type="PathwayCommons" id="Q05513"/>
<dbReference type="Reactome" id="R-HSA-114604">
    <property type="pathway name" value="GPVI-mediated activation cascade"/>
</dbReference>
<dbReference type="Reactome" id="R-HSA-2173791">
    <property type="pathway name" value="TGF-beta receptor signaling in EMT (epithelial to mesenchymal transition)"/>
</dbReference>
<dbReference type="Reactome" id="R-HSA-5218921">
    <property type="pathway name" value="VEGFR2 mediated cell proliferation"/>
</dbReference>
<dbReference type="Reactome" id="R-HSA-5668599">
    <property type="pathway name" value="RHO GTPases Activate NADPH Oxidases"/>
</dbReference>
<dbReference type="Reactome" id="R-HSA-9634635">
    <property type="pathway name" value="Estrogen-stimulated signaling through PRKCZ"/>
</dbReference>
<dbReference type="SignaLink" id="Q05513"/>
<dbReference type="SIGNOR" id="Q05513"/>
<dbReference type="BioGRID-ORCS" id="5590">
    <property type="hits" value="23 hits in 1195 CRISPR screens"/>
</dbReference>
<dbReference type="ChiTaRS" id="PRKCZ">
    <property type="organism name" value="human"/>
</dbReference>
<dbReference type="GeneWiki" id="Protein_kinase_M_zeta/Protein_kinase_C_zeta"/>
<dbReference type="GenomeRNAi" id="5590"/>
<dbReference type="Pharos" id="Q05513">
    <property type="development level" value="Tchem"/>
</dbReference>
<dbReference type="PRO" id="PR:Q05513"/>
<dbReference type="Proteomes" id="UP000005640">
    <property type="component" value="Chromosome 1"/>
</dbReference>
<dbReference type="RNAct" id="Q05513">
    <property type="molecule type" value="protein"/>
</dbReference>
<dbReference type="Bgee" id="ENSG00000067606">
    <property type="expression patterns" value="Expressed in right hemisphere of cerebellum and 168 other cell types or tissues"/>
</dbReference>
<dbReference type="ExpressionAtlas" id="Q05513">
    <property type="expression patterns" value="baseline and differential"/>
</dbReference>
<dbReference type="GO" id="GO:0045179">
    <property type="term" value="C:apical cortex"/>
    <property type="evidence" value="ECO:0007669"/>
    <property type="project" value="Ensembl"/>
</dbReference>
<dbReference type="GO" id="GO:0016324">
    <property type="term" value="C:apical plasma membrane"/>
    <property type="evidence" value="ECO:0007669"/>
    <property type="project" value="Ensembl"/>
</dbReference>
<dbReference type="GO" id="GO:0043203">
    <property type="term" value="C:axon hillock"/>
    <property type="evidence" value="ECO:0007669"/>
    <property type="project" value="Ensembl"/>
</dbReference>
<dbReference type="GO" id="GO:0005923">
    <property type="term" value="C:bicellular tight junction"/>
    <property type="evidence" value="ECO:0007669"/>
    <property type="project" value="Ensembl"/>
</dbReference>
<dbReference type="GO" id="GO:0030054">
    <property type="term" value="C:cell junction"/>
    <property type="evidence" value="ECO:0000304"/>
    <property type="project" value="Reactome"/>
</dbReference>
<dbReference type="GO" id="GO:0005911">
    <property type="term" value="C:cell-cell junction"/>
    <property type="evidence" value="ECO:0000314"/>
    <property type="project" value="UniProtKB"/>
</dbReference>
<dbReference type="GO" id="GO:0036064">
    <property type="term" value="C:ciliary basal body"/>
    <property type="evidence" value="ECO:0000314"/>
    <property type="project" value="HPA"/>
</dbReference>
<dbReference type="GO" id="GO:0005737">
    <property type="term" value="C:cytoplasm"/>
    <property type="evidence" value="ECO:0000304"/>
    <property type="project" value="ProtInc"/>
</dbReference>
<dbReference type="GO" id="GO:0005829">
    <property type="term" value="C:cytosol"/>
    <property type="evidence" value="ECO:0000314"/>
    <property type="project" value="HPA"/>
</dbReference>
<dbReference type="GO" id="GO:0005768">
    <property type="term" value="C:endosome"/>
    <property type="evidence" value="ECO:0007669"/>
    <property type="project" value="UniProtKB-SubCell"/>
</dbReference>
<dbReference type="GO" id="GO:0070062">
    <property type="term" value="C:extracellular exosome"/>
    <property type="evidence" value="ECO:0007005"/>
    <property type="project" value="UniProtKB"/>
</dbReference>
<dbReference type="GO" id="GO:0016020">
    <property type="term" value="C:membrane"/>
    <property type="evidence" value="ECO:0000304"/>
    <property type="project" value="ProtInc"/>
</dbReference>
<dbReference type="GO" id="GO:0035748">
    <property type="term" value="C:myelin sheath abaxonal region"/>
    <property type="evidence" value="ECO:0007669"/>
    <property type="project" value="Ensembl"/>
</dbReference>
<dbReference type="GO" id="GO:0005635">
    <property type="term" value="C:nuclear envelope"/>
    <property type="evidence" value="ECO:0007669"/>
    <property type="project" value="Ensembl"/>
</dbReference>
<dbReference type="GO" id="GO:0016363">
    <property type="term" value="C:nuclear matrix"/>
    <property type="evidence" value="ECO:0007669"/>
    <property type="project" value="Ensembl"/>
</dbReference>
<dbReference type="GO" id="GO:0120157">
    <property type="term" value="C:PAR polarity complex"/>
    <property type="evidence" value="ECO:0000250"/>
    <property type="project" value="ComplexPortal"/>
</dbReference>
<dbReference type="GO" id="GO:0005886">
    <property type="term" value="C:plasma membrane"/>
    <property type="evidence" value="ECO:0000314"/>
    <property type="project" value="HPA"/>
</dbReference>
<dbReference type="GO" id="GO:0070160">
    <property type="term" value="C:tight junction"/>
    <property type="evidence" value="ECO:0000303"/>
    <property type="project" value="ComplexPortal"/>
</dbReference>
<dbReference type="GO" id="GO:0031982">
    <property type="term" value="C:vesicle"/>
    <property type="evidence" value="ECO:0000314"/>
    <property type="project" value="UniProtKB"/>
</dbReference>
<dbReference type="GO" id="GO:0005524">
    <property type="term" value="F:ATP binding"/>
    <property type="evidence" value="ECO:0007669"/>
    <property type="project" value="UniProtKB-KW"/>
</dbReference>
<dbReference type="GO" id="GO:0004697">
    <property type="term" value="F:diacylglycerol-dependent serine/threonine kinase activity"/>
    <property type="evidence" value="ECO:0000269"/>
    <property type="project" value="Reactome"/>
</dbReference>
<dbReference type="GO" id="GO:0043560">
    <property type="term" value="F:insulin receptor substrate binding"/>
    <property type="evidence" value="ECO:0000314"/>
    <property type="project" value="BHF-UCL"/>
</dbReference>
<dbReference type="GO" id="GO:0004672">
    <property type="term" value="F:protein kinase activity"/>
    <property type="evidence" value="ECO:0000314"/>
    <property type="project" value="UniProtKB"/>
</dbReference>
<dbReference type="GO" id="GO:0106310">
    <property type="term" value="F:protein serine kinase activity"/>
    <property type="evidence" value="ECO:0007669"/>
    <property type="project" value="RHEA"/>
</dbReference>
<dbReference type="GO" id="GO:0004674">
    <property type="term" value="F:protein serine/threonine kinase activity"/>
    <property type="evidence" value="ECO:0000314"/>
    <property type="project" value="BHF-UCL"/>
</dbReference>
<dbReference type="GO" id="GO:0008270">
    <property type="term" value="F:zinc ion binding"/>
    <property type="evidence" value="ECO:0007669"/>
    <property type="project" value="UniProtKB-KW"/>
</dbReference>
<dbReference type="GO" id="GO:0032869">
    <property type="term" value="P:cellular response to insulin stimulus"/>
    <property type="evidence" value="ECO:0000318"/>
    <property type="project" value="GO_Central"/>
</dbReference>
<dbReference type="GO" id="GO:0030010">
    <property type="term" value="P:establishment of cell polarity"/>
    <property type="evidence" value="ECO:0000250"/>
    <property type="project" value="UniProtKB"/>
</dbReference>
<dbReference type="GO" id="GO:0045197">
    <property type="term" value="P:establishment or maintenance of epithelial cell apical/basal polarity"/>
    <property type="evidence" value="ECO:0000250"/>
    <property type="project" value="ComplexPortal"/>
</dbReference>
<dbReference type="GO" id="GO:0006954">
    <property type="term" value="P:inflammatory response"/>
    <property type="evidence" value="ECO:0007669"/>
    <property type="project" value="UniProtKB-KW"/>
</dbReference>
<dbReference type="GO" id="GO:0035556">
    <property type="term" value="P:intracellular signal transduction"/>
    <property type="evidence" value="ECO:0000318"/>
    <property type="project" value="GO_Central"/>
</dbReference>
<dbReference type="GO" id="GO:0060291">
    <property type="term" value="P:long-term synaptic potentiation"/>
    <property type="evidence" value="ECO:0000250"/>
    <property type="project" value="UniProtKB"/>
</dbReference>
<dbReference type="GO" id="GO:0000226">
    <property type="term" value="P:microtubule cytoskeleton organization"/>
    <property type="evidence" value="ECO:0007669"/>
    <property type="project" value="Ensembl"/>
</dbReference>
<dbReference type="GO" id="GO:0043066">
    <property type="term" value="P:negative regulation of apoptotic process"/>
    <property type="evidence" value="ECO:0000304"/>
    <property type="project" value="ProtInc"/>
</dbReference>
<dbReference type="GO" id="GO:0046627">
    <property type="term" value="P:negative regulation of insulin receptor signaling pathway"/>
    <property type="evidence" value="ECO:0000315"/>
    <property type="project" value="BHF-UCL"/>
</dbReference>
<dbReference type="GO" id="GO:0031333">
    <property type="term" value="P:negative regulation of protein-containing complex assembly"/>
    <property type="evidence" value="ECO:0000315"/>
    <property type="project" value="BHF-UCL"/>
</dbReference>
<dbReference type="GO" id="GO:1990138">
    <property type="term" value="P:neuron projection extension"/>
    <property type="evidence" value="ECO:0007669"/>
    <property type="project" value="Ensembl"/>
</dbReference>
<dbReference type="GO" id="GO:0070374">
    <property type="term" value="P:positive regulation of ERK1 and ERK2 cascade"/>
    <property type="evidence" value="ECO:0000315"/>
    <property type="project" value="UniProtKB"/>
</dbReference>
<dbReference type="GO" id="GO:2000463">
    <property type="term" value="P:positive regulation of excitatory postsynaptic potential"/>
    <property type="evidence" value="ECO:0000250"/>
    <property type="project" value="UniProtKB"/>
</dbReference>
<dbReference type="GO" id="GO:0046628">
    <property type="term" value="P:positive regulation of insulin receptor signaling pathway"/>
    <property type="evidence" value="ECO:0000250"/>
    <property type="project" value="UniProtKB"/>
</dbReference>
<dbReference type="GO" id="GO:0032733">
    <property type="term" value="P:positive regulation of interleukin-10 production"/>
    <property type="evidence" value="ECO:0000250"/>
    <property type="project" value="UniProtKB"/>
</dbReference>
<dbReference type="GO" id="GO:0032736">
    <property type="term" value="P:positive regulation of interleukin-13 production"/>
    <property type="evidence" value="ECO:0000250"/>
    <property type="project" value="UniProtKB"/>
</dbReference>
<dbReference type="GO" id="GO:0032753">
    <property type="term" value="P:positive regulation of interleukin-4 production"/>
    <property type="evidence" value="ECO:0000250"/>
    <property type="project" value="UniProtKB"/>
</dbReference>
<dbReference type="GO" id="GO:0032754">
    <property type="term" value="P:positive regulation of interleukin-5 production"/>
    <property type="evidence" value="ECO:0000250"/>
    <property type="project" value="UniProtKB"/>
</dbReference>
<dbReference type="GO" id="GO:0051092">
    <property type="term" value="P:positive regulation of NF-kappaB transcription factor activity"/>
    <property type="evidence" value="ECO:0000250"/>
    <property type="project" value="UniProtKB"/>
</dbReference>
<dbReference type="GO" id="GO:2000553">
    <property type="term" value="P:positive regulation of T-helper 2 cell cytokine production"/>
    <property type="evidence" value="ECO:0000250"/>
    <property type="project" value="UniProtKB"/>
</dbReference>
<dbReference type="GO" id="GO:0045630">
    <property type="term" value="P:positive regulation of T-helper 2 cell differentiation"/>
    <property type="evidence" value="ECO:0000250"/>
    <property type="project" value="UniProtKB"/>
</dbReference>
<dbReference type="GO" id="GO:0072659">
    <property type="term" value="P:protein localization to plasma membrane"/>
    <property type="evidence" value="ECO:0000318"/>
    <property type="project" value="GO_Central"/>
</dbReference>
<dbReference type="GO" id="GO:0006468">
    <property type="term" value="P:protein phosphorylation"/>
    <property type="evidence" value="ECO:0000314"/>
    <property type="project" value="UniProtKB"/>
</dbReference>
<dbReference type="GO" id="GO:0007165">
    <property type="term" value="P:signal transduction"/>
    <property type="evidence" value="ECO:0000304"/>
    <property type="project" value="ProtInc"/>
</dbReference>
<dbReference type="CDD" id="cd21095">
    <property type="entry name" value="C1_aPKC_zeta"/>
    <property type="match status" value="1"/>
</dbReference>
<dbReference type="CDD" id="cd06404">
    <property type="entry name" value="PB1_aPKC"/>
    <property type="match status" value="1"/>
</dbReference>
<dbReference type="CDD" id="cd05617">
    <property type="entry name" value="STKc_aPKC_zeta"/>
    <property type="match status" value="1"/>
</dbReference>
<dbReference type="FunFam" id="1.10.510.10:FF:000048">
    <property type="entry name" value="Protein kinase C"/>
    <property type="match status" value="1"/>
</dbReference>
<dbReference type="FunFam" id="3.10.20.90:FF:000071">
    <property type="entry name" value="Protein kinase C"/>
    <property type="match status" value="1"/>
</dbReference>
<dbReference type="FunFam" id="3.30.200.20:FF:000070">
    <property type="entry name" value="Protein kinase C"/>
    <property type="match status" value="1"/>
</dbReference>
<dbReference type="FunFam" id="3.30.60.20:FF:000012">
    <property type="entry name" value="Protein kinase C"/>
    <property type="match status" value="1"/>
</dbReference>
<dbReference type="Gene3D" id="3.30.60.20">
    <property type="match status" value="1"/>
</dbReference>
<dbReference type="Gene3D" id="3.10.20.90">
    <property type="entry name" value="Phosphatidylinositol 3-kinase Catalytic Subunit, Chain A, domain 1"/>
    <property type="match status" value="1"/>
</dbReference>
<dbReference type="Gene3D" id="3.30.200.20">
    <property type="entry name" value="Phosphorylase Kinase, domain 1"/>
    <property type="match status" value="1"/>
</dbReference>
<dbReference type="Gene3D" id="1.10.510.10">
    <property type="entry name" value="Transferase(Phosphotransferase) domain 1"/>
    <property type="match status" value="1"/>
</dbReference>
<dbReference type="InterPro" id="IPR000961">
    <property type="entry name" value="AGC-kinase_C"/>
</dbReference>
<dbReference type="InterPro" id="IPR034662">
    <property type="entry name" value="aPKC_zeta"/>
</dbReference>
<dbReference type="InterPro" id="IPR046349">
    <property type="entry name" value="C1-like_sf"/>
</dbReference>
<dbReference type="InterPro" id="IPR047314">
    <property type="entry name" value="C1_aPKC_zeta"/>
</dbReference>
<dbReference type="InterPro" id="IPR020454">
    <property type="entry name" value="DAG/PE-bd"/>
</dbReference>
<dbReference type="InterPro" id="IPR011009">
    <property type="entry name" value="Kinase-like_dom_sf"/>
</dbReference>
<dbReference type="InterPro" id="IPR053793">
    <property type="entry name" value="PB1-like"/>
</dbReference>
<dbReference type="InterPro" id="IPR034877">
    <property type="entry name" value="PB1_aPKC"/>
</dbReference>
<dbReference type="InterPro" id="IPR000270">
    <property type="entry name" value="PB1_dom"/>
</dbReference>
<dbReference type="InterPro" id="IPR002219">
    <property type="entry name" value="PE/DAG-bd"/>
</dbReference>
<dbReference type="InterPro" id="IPR012233">
    <property type="entry name" value="PKC"/>
</dbReference>
<dbReference type="InterPro" id="IPR017892">
    <property type="entry name" value="Pkinase_C"/>
</dbReference>
<dbReference type="InterPro" id="IPR000719">
    <property type="entry name" value="Prot_kinase_dom"/>
</dbReference>
<dbReference type="InterPro" id="IPR017441">
    <property type="entry name" value="Protein_kinase_ATP_BS"/>
</dbReference>
<dbReference type="InterPro" id="IPR008271">
    <property type="entry name" value="Ser/Thr_kinase_AS"/>
</dbReference>
<dbReference type="PANTHER" id="PTHR24351">
    <property type="entry name" value="RIBOSOMAL PROTEIN S6 KINASE"/>
    <property type="match status" value="1"/>
</dbReference>
<dbReference type="Pfam" id="PF00130">
    <property type="entry name" value="C1_1"/>
    <property type="match status" value="1"/>
</dbReference>
<dbReference type="Pfam" id="PF00564">
    <property type="entry name" value="PB1"/>
    <property type="match status" value="1"/>
</dbReference>
<dbReference type="Pfam" id="PF00069">
    <property type="entry name" value="Pkinase"/>
    <property type="match status" value="1"/>
</dbReference>
<dbReference type="Pfam" id="PF00433">
    <property type="entry name" value="Pkinase_C"/>
    <property type="match status" value="1"/>
</dbReference>
<dbReference type="PIRSF" id="PIRSF000554">
    <property type="entry name" value="PKC_zeta"/>
    <property type="match status" value="1"/>
</dbReference>
<dbReference type="PRINTS" id="PR00008">
    <property type="entry name" value="DAGPEDOMAIN"/>
</dbReference>
<dbReference type="SMART" id="SM00109">
    <property type="entry name" value="C1"/>
    <property type="match status" value="1"/>
</dbReference>
<dbReference type="SMART" id="SM00666">
    <property type="entry name" value="PB1"/>
    <property type="match status" value="1"/>
</dbReference>
<dbReference type="SMART" id="SM00133">
    <property type="entry name" value="S_TK_X"/>
    <property type="match status" value="1"/>
</dbReference>
<dbReference type="SMART" id="SM00220">
    <property type="entry name" value="S_TKc"/>
    <property type="match status" value="1"/>
</dbReference>
<dbReference type="SUPFAM" id="SSF54277">
    <property type="entry name" value="CAD &amp; PB1 domains"/>
    <property type="match status" value="1"/>
</dbReference>
<dbReference type="SUPFAM" id="SSF57889">
    <property type="entry name" value="Cysteine-rich domain"/>
    <property type="match status" value="1"/>
</dbReference>
<dbReference type="SUPFAM" id="SSF56112">
    <property type="entry name" value="Protein kinase-like (PK-like)"/>
    <property type="match status" value="1"/>
</dbReference>
<dbReference type="PROSITE" id="PS51285">
    <property type="entry name" value="AGC_KINASE_CTER"/>
    <property type="match status" value="1"/>
</dbReference>
<dbReference type="PROSITE" id="PS51745">
    <property type="entry name" value="PB1"/>
    <property type="match status" value="1"/>
</dbReference>
<dbReference type="PROSITE" id="PS00107">
    <property type="entry name" value="PROTEIN_KINASE_ATP"/>
    <property type="match status" value="1"/>
</dbReference>
<dbReference type="PROSITE" id="PS50011">
    <property type="entry name" value="PROTEIN_KINASE_DOM"/>
    <property type="match status" value="1"/>
</dbReference>
<dbReference type="PROSITE" id="PS00108">
    <property type="entry name" value="PROTEIN_KINASE_ST"/>
    <property type="match status" value="1"/>
</dbReference>
<dbReference type="PROSITE" id="PS00479">
    <property type="entry name" value="ZF_DAG_PE_1"/>
    <property type="match status" value="1"/>
</dbReference>
<dbReference type="PROSITE" id="PS50081">
    <property type="entry name" value="ZF_DAG_PE_2"/>
    <property type="match status" value="1"/>
</dbReference>
<gene>
    <name type="primary">PRKCZ</name>
    <name type="synonym">PKC2</name>
</gene>
<protein>
    <recommendedName>
        <fullName>Protein kinase C zeta type</fullName>
        <ecNumber evidence="18 20 30">2.7.11.13</ecNumber>
    </recommendedName>
    <alternativeName>
        <fullName>nPKC-zeta</fullName>
    </alternativeName>
</protein>
<name>KPCZ_HUMAN</name>